<proteinExistence type="inferred from homology"/>
<reference key="1">
    <citation type="submission" date="2008-10" db="EMBL/GenBank/DDBJ databases">
        <title>Genome sequence of Ureaplasma urealyticum serovar 10 ATCC-33699.</title>
        <authorList>
            <person name="Shrivastava S."/>
            <person name="Methe B.A."/>
            <person name="Glass J."/>
            <person name="White K."/>
            <person name="Duffy L.B."/>
        </authorList>
    </citation>
    <scope>NUCLEOTIDE SEQUENCE [LARGE SCALE GENOMIC DNA]</scope>
    <source>
        <strain>ATCC 33699 / Western</strain>
    </source>
</reference>
<name>RS3_UREU1</name>
<sequence length="257" mass="28858">MGQKVNPNGLRFGINKQWLSRWVPTDQLQMAKWLVEDDKIRKYLSTKYKNAGIDHVEIERDQQRVNVYVYAVQSGLLIGTEASEKKLIELAINKIVGRKQLVSLKVVEVQIPELQASLMAREIADAIENRVSFRIAQKMVIKKVLKAGARGIKTHVSGRLGGVEMAREEGYTQGVMTLHTLRADIDYSMQEAHTTYGIIGVKVWINRGELFGNKLVNSVAHAANKEFSRSSKPKKGSFNRSSRSKNTKPAPKQAVSE</sequence>
<organism>
    <name type="scientific">Ureaplasma urealyticum serovar 10 (strain ATCC 33699 / Western)</name>
    <dbReference type="NCBI Taxonomy" id="565575"/>
    <lineage>
        <taxon>Bacteria</taxon>
        <taxon>Bacillati</taxon>
        <taxon>Mycoplasmatota</taxon>
        <taxon>Mycoplasmoidales</taxon>
        <taxon>Mycoplasmoidaceae</taxon>
        <taxon>Ureaplasma</taxon>
    </lineage>
</organism>
<dbReference type="EMBL" id="CP001184">
    <property type="protein sequence ID" value="ACI59930.1"/>
    <property type="molecule type" value="Genomic_DNA"/>
</dbReference>
<dbReference type="RefSeq" id="WP_004026040.1">
    <property type="nucleotide sequence ID" value="NC_011374.1"/>
</dbReference>
<dbReference type="SMR" id="B5ZB46"/>
<dbReference type="STRING" id="565575.UUR10_0232"/>
<dbReference type="GeneID" id="93848712"/>
<dbReference type="KEGG" id="uue:UUR10_0232"/>
<dbReference type="eggNOG" id="COG0092">
    <property type="taxonomic scope" value="Bacteria"/>
</dbReference>
<dbReference type="HOGENOM" id="CLU_058591_0_2_14"/>
<dbReference type="OrthoDB" id="9806396at2"/>
<dbReference type="Proteomes" id="UP000002018">
    <property type="component" value="Chromosome"/>
</dbReference>
<dbReference type="GO" id="GO:0022627">
    <property type="term" value="C:cytosolic small ribosomal subunit"/>
    <property type="evidence" value="ECO:0007669"/>
    <property type="project" value="TreeGrafter"/>
</dbReference>
<dbReference type="GO" id="GO:0003729">
    <property type="term" value="F:mRNA binding"/>
    <property type="evidence" value="ECO:0007669"/>
    <property type="project" value="UniProtKB-UniRule"/>
</dbReference>
<dbReference type="GO" id="GO:0019843">
    <property type="term" value="F:rRNA binding"/>
    <property type="evidence" value="ECO:0007669"/>
    <property type="project" value="UniProtKB-UniRule"/>
</dbReference>
<dbReference type="GO" id="GO:0003735">
    <property type="term" value="F:structural constituent of ribosome"/>
    <property type="evidence" value="ECO:0007669"/>
    <property type="project" value="InterPro"/>
</dbReference>
<dbReference type="GO" id="GO:0006412">
    <property type="term" value="P:translation"/>
    <property type="evidence" value="ECO:0007669"/>
    <property type="project" value="UniProtKB-UniRule"/>
</dbReference>
<dbReference type="CDD" id="cd02412">
    <property type="entry name" value="KH-II_30S_S3"/>
    <property type="match status" value="1"/>
</dbReference>
<dbReference type="FunFam" id="3.30.300.20:FF:000001">
    <property type="entry name" value="30S ribosomal protein S3"/>
    <property type="match status" value="1"/>
</dbReference>
<dbReference type="Gene3D" id="3.30.300.20">
    <property type="match status" value="1"/>
</dbReference>
<dbReference type="Gene3D" id="3.30.1140.32">
    <property type="entry name" value="Ribosomal protein S3, C-terminal domain"/>
    <property type="match status" value="1"/>
</dbReference>
<dbReference type="HAMAP" id="MF_01309_B">
    <property type="entry name" value="Ribosomal_uS3_B"/>
    <property type="match status" value="1"/>
</dbReference>
<dbReference type="InterPro" id="IPR004087">
    <property type="entry name" value="KH_dom"/>
</dbReference>
<dbReference type="InterPro" id="IPR015946">
    <property type="entry name" value="KH_dom-like_a/b"/>
</dbReference>
<dbReference type="InterPro" id="IPR004044">
    <property type="entry name" value="KH_dom_type_2"/>
</dbReference>
<dbReference type="InterPro" id="IPR009019">
    <property type="entry name" value="KH_sf_prok-type"/>
</dbReference>
<dbReference type="InterPro" id="IPR036419">
    <property type="entry name" value="Ribosomal_S3_C_sf"/>
</dbReference>
<dbReference type="InterPro" id="IPR005704">
    <property type="entry name" value="Ribosomal_uS3_bac-typ"/>
</dbReference>
<dbReference type="InterPro" id="IPR001351">
    <property type="entry name" value="Ribosomal_uS3_C"/>
</dbReference>
<dbReference type="InterPro" id="IPR018280">
    <property type="entry name" value="Ribosomal_uS3_CS"/>
</dbReference>
<dbReference type="NCBIfam" id="TIGR01009">
    <property type="entry name" value="rpsC_bact"/>
    <property type="match status" value="1"/>
</dbReference>
<dbReference type="PANTHER" id="PTHR11760">
    <property type="entry name" value="30S/40S RIBOSOMAL PROTEIN S3"/>
    <property type="match status" value="1"/>
</dbReference>
<dbReference type="PANTHER" id="PTHR11760:SF19">
    <property type="entry name" value="SMALL RIBOSOMAL SUBUNIT PROTEIN US3C"/>
    <property type="match status" value="1"/>
</dbReference>
<dbReference type="Pfam" id="PF07650">
    <property type="entry name" value="KH_2"/>
    <property type="match status" value="1"/>
</dbReference>
<dbReference type="Pfam" id="PF00189">
    <property type="entry name" value="Ribosomal_S3_C"/>
    <property type="match status" value="1"/>
</dbReference>
<dbReference type="SMART" id="SM00322">
    <property type="entry name" value="KH"/>
    <property type="match status" value="1"/>
</dbReference>
<dbReference type="SUPFAM" id="SSF54814">
    <property type="entry name" value="Prokaryotic type KH domain (KH-domain type II)"/>
    <property type="match status" value="1"/>
</dbReference>
<dbReference type="SUPFAM" id="SSF54821">
    <property type="entry name" value="Ribosomal protein S3 C-terminal domain"/>
    <property type="match status" value="1"/>
</dbReference>
<dbReference type="PROSITE" id="PS50823">
    <property type="entry name" value="KH_TYPE_2"/>
    <property type="match status" value="1"/>
</dbReference>
<dbReference type="PROSITE" id="PS00548">
    <property type="entry name" value="RIBOSOMAL_S3"/>
    <property type="match status" value="1"/>
</dbReference>
<protein>
    <recommendedName>
        <fullName evidence="1">Small ribosomal subunit protein uS3</fullName>
    </recommendedName>
    <alternativeName>
        <fullName evidence="3">30S ribosomal protein S3</fullName>
    </alternativeName>
</protein>
<keyword id="KW-0687">Ribonucleoprotein</keyword>
<keyword id="KW-0689">Ribosomal protein</keyword>
<keyword id="KW-0694">RNA-binding</keyword>
<keyword id="KW-0699">rRNA-binding</keyword>
<accession>B5ZB46</accession>
<comment type="function">
    <text evidence="1">Binds the lower part of the 30S subunit head. Binds mRNA in the 70S ribosome, positioning it for translation.</text>
</comment>
<comment type="subunit">
    <text evidence="1">Part of the 30S ribosomal subunit. Forms a tight complex with proteins S10 and S14.</text>
</comment>
<comment type="similarity">
    <text evidence="1">Belongs to the universal ribosomal protein uS3 family.</text>
</comment>
<evidence type="ECO:0000255" key="1">
    <source>
        <dbReference type="HAMAP-Rule" id="MF_01309"/>
    </source>
</evidence>
<evidence type="ECO:0000256" key="2">
    <source>
        <dbReference type="SAM" id="MobiDB-lite"/>
    </source>
</evidence>
<evidence type="ECO:0000305" key="3"/>
<gene>
    <name evidence="1" type="primary">rpsC</name>
    <name type="ordered locus">UUR10_0232</name>
</gene>
<feature type="chain" id="PRO_1000141031" description="Small ribosomal subunit protein uS3">
    <location>
        <begin position="1"/>
        <end position="257"/>
    </location>
</feature>
<feature type="domain" description="KH type-2" evidence="1">
    <location>
        <begin position="40"/>
        <end position="110"/>
    </location>
</feature>
<feature type="region of interest" description="Disordered" evidence="2">
    <location>
        <begin position="223"/>
        <end position="257"/>
    </location>
</feature>
<feature type="compositionally biased region" description="Basic residues" evidence="2">
    <location>
        <begin position="231"/>
        <end position="246"/>
    </location>
</feature>